<reference key="1">
    <citation type="journal article" date="2009" name="PLoS Genet.">
        <title>The complete genome and proteome of Laribacter hongkongensis reveal potential mechanisms for adaptations to different temperatures and habitats.</title>
        <authorList>
            <person name="Woo P.C.Y."/>
            <person name="Lau S.K.P."/>
            <person name="Tse H."/>
            <person name="Teng J.L.L."/>
            <person name="Curreem S.O."/>
            <person name="Tsang A.K.L."/>
            <person name="Fan R.Y.Y."/>
            <person name="Wong G.K.M."/>
            <person name="Huang Y."/>
            <person name="Loman N.J."/>
            <person name="Snyder L.A.S."/>
            <person name="Cai J.J."/>
            <person name="Huang J.-D."/>
            <person name="Mak W."/>
            <person name="Pallen M.J."/>
            <person name="Lok S."/>
            <person name="Yuen K.-Y."/>
        </authorList>
    </citation>
    <scope>NUCLEOTIDE SEQUENCE [LARGE SCALE GENOMIC DNA]</scope>
    <source>
        <strain>HLHK9</strain>
    </source>
</reference>
<name>ACP_LARHH</name>
<organism>
    <name type="scientific">Laribacter hongkongensis (strain HLHK9)</name>
    <dbReference type="NCBI Taxonomy" id="557598"/>
    <lineage>
        <taxon>Bacteria</taxon>
        <taxon>Pseudomonadati</taxon>
        <taxon>Pseudomonadota</taxon>
        <taxon>Betaproteobacteria</taxon>
        <taxon>Neisseriales</taxon>
        <taxon>Aquaspirillaceae</taxon>
        <taxon>Laribacter</taxon>
    </lineage>
</organism>
<protein>
    <recommendedName>
        <fullName evidence="1">Acyl carrier protein</fullName>
        <shortName evidence="1">ACP</shortName>
    </recommendedName>
</protein>
<evidence type="ECO:0000255" key="1">
    <source>
        <dbReference type="HAMAP-Rule" id="MF_01217"/>
    </source>
</evidence>
<evidence type="ECO:0000255" key="2">
    <source>
        <dbReference type="PROSITE-ProRule" id="PRU00258"/>
    </source>
</evidence>
<comment type="function">
    <text evidence="1">Carrier of the growing fatty acid chain in fatty acid biosynthesis.</text>
</comment>
<comment type="pathway">
    <text evidence="1">Lipid metabolism; fatty acid biosynthesis.</text>
</comment>
<comment type="subcellular location">
    <subcellularLocation>
        <location evidence="1">Cytoplasm</location>
    </subcellularLocation>
</comment>
<comment type="PTM">
    <text evidence="1">4'-phosphopantetheine is transferred from CoA to a specific serine of apo-ACP by AcpS. This modification is essential for activity because fatty acids are bound in thioester linkage to the sulfhydryl of the prosthetic group.</text>
</comment>
<comment type="similarity">
    <text evidence="1">Belongs to the acyl carrier protein (ACP) family.</text>
</comment>
<gene>
    <name evidence="1" type="primary">acpP</name>
    <name type="ordered locus">LHK_00569</name>
</gene>
<dbReference type="EMBL" id="CP001154">
    <property type="protein sequence ID" value="ACO73562.1"/>
    <property type="molecule type" value="Genomic_DNA"/>
</dbReference>
<dbReference type="RefSeq" id="WP_012696054.1">
    <property type="nucleotide sequence ID" value="NC_012559.1"/>
</dbReference>
<dbReference type="SMR" id="C1DCE5"/>
<dbReference type="STRING" id="557598.LHK_00569"/>
<dbReference type="GeneID" id="75108914"/>
<dbReference type="KEGG" id="lhk:LHK_00569"/>
<dbReference type="eggNOG" id="COG0236">
    <property type="taxonomic scope" value="Bacteria"/>
</dbReference>
<dbReference type="HOGENOM" id="CLU_108696_5_1_4"/>
<dbReference type="UniPathway" id="UPA00094"/>
<dbReference type="Proteomes" id="UP000002010">
    <property type="component" value="Chromosome"/>
</dbReference>
<dbReference type="GO" id="GO:0005829">
    <property type="term" value="C:cytosol"/>
    <property type="evidence" value="ECO:0007669"/>
    <property type="project" value="TreeGrafter"/>
</dbReference>
<dbReference type="GO" id="GO:0016020">
    <property type="term" value="C:membrane"/>
    <property type="evidence" value="ECO:0007669"/>
    <property type="project" value="GOC"/>
</dbReference>
<dbReference type="GO" id="GO:0000035">
    <property type="term" value="F:acyl binding"/>
    <property type="evidence" value="ECO:0007669"/>
    <property type="project" value="TreeGrafter"/>
</dbReference>
<dbReference type="GO" id="GO:0000036">
    <property type="term" value="F:acyl carrier activity"/>
    <property type="evidence" value="ECO:0007669"/>
    <property type="project" value="UniProtKB-UniRule"/>
</dbReference>
<dbReference type="GO" id="GO:0009245">
    <property type="term" value="P:lipid A biosynthetic process"/>
    <property type="evidence" value="ECO:0007669"/>
    <property type="project" value="TreeGrafter"/>
</dbReference>
<dbReference type="FunFam" id="1.10.1200.10:FF:000001">
    <property type="entry name" value="Acyl carrier protein"/>
    <property type="match status" value="1"/>
</dbReference>
<dbReference type="Gene3D" id="1.10.1200.10">
    <property type="entry name" value="ACP-like"/>
    <property type="match status" value="1"/>
</dbReference>
<dbReference type="HAMAP" id="MF_01217">
    <property type="entry name" value="Acyl_carrier"/>
    <property type="match status" value="1"/>
</dbReference>
<dbReference type="InterPro" id="IPR003231">
    <property type="entry name" value="ACP"/>
</dbReference>
<dbReference type="InterPro" id="IPR036736">
    <property type="entry name" value="ACP-like_sf"/>
</dbReference>
<dbReference type="InterPro" id="IPR009081">
    <property type="entry name" value="PP-bd_ACP"/>
</dbReference>
<dbReference type="InterPro" id="IPR006162">
    <property type="entry name" value="Ppantetheine_attach_site"/>
</dbReference>
<dbReference type="NCBIfam" id="TIGR00517">
    <property type="entry name" value="acyl_carrier"/>
    <property type="match status" value="1"/>
</dbReference>
<dbReference type="NCBIfam" id="NF002148">
    <property type="entry name" value="PRK00982.1-2"/>
    <property type="match status" value="1"/>
</dbReference>
<dbReference type="NCBIfam" id="NF002149">
    <property type="entry name" value="PRK00982.1-3"/>
    <property type="match status" value="1"/>
</dbReference>
<dbReference type="NCBIfam" id="NF002150">
    <property type="entry name" value="PRK00982.1-4"/>
    <property type="match status" value="1"/>
</dbReference>
<dbReference type="NCBIfam" id="NF002151">
    <property type="entry name" value="PRK00982.1-5"/>
    <property type="match status" value="1"/>
</dbReference>
<dbReference type="PANTHER" id="PTHR20863">
    <property type="entry name" value="ACYL CARRIER PROTEIN"/>
    <property type="match status" value="1"/>
</dbReference>
<dbReference type="PANTHER" id="PTHR20863:SF76">
    <property type="entry name" value="CARRIER DOMAIN-CONTAINING PROTEIN"/>
    <property type="match status" value="1"/>
</dbReference>
<dbReference type="Pfam" id="PF00550">
    <property type="entry name" value="PP-binding"/>
    <property type="match status" value="1"/>
</dbReference>
<dbReference type="SUPFAM" id="SSF47336">
    <property type="entry name" value="ACP-like"/>
    <property type="match status" value="1"/>
</dbReference>
<dbReference type="PROSITE" id="PS50075">
    <property type="entry name" value="CARRIER"/>
    <property type="match status" value="1"/>
</dbReference>
<dbReference type="PROSITE" id="PS00012">
    <property type="entry name" value="PHOSPHOPANTETHEINE"/>
    <property type="match status" value="1"/>
</dbReference>
<sequence>MENIEQRVKKIVAEQLGVNEAEVKNESSFVDDLGADSLDTVELVMALEEEFECEIPDEEAEKITTVQQAIDYVTAHLDK</sequence>
<keyword id="KW-0963">Cytoplasm</keyword>
<keyword id="KW-0275">Fatty acid biosynthesis</keyword>
<keyword id="KW-0276">Fatty acid metabolism</keyword>
<keyword id="KW-0444">Lipid biosynthesis</keyword>
<keyword id="KW-0443">Lipid metabolism</keyword>
<keyword id="KW-0596">Phosphopantetheine</keyword>
<keyword id="KW-0597">Phosphoprotein</keyword>
<keyword id="KW-1185">Reference proteome</keyword>
<feature type="chain" id="PRO_1000164790" description="Acyl carrier protein">
    <location>
        <begin position="1"/>
        <end position="79"/>
    </location>
</feature>
<feature type="domain" description="Carrier" evidence="2">
    <location>
        <begin position="2"/>
        <end position="77"/>
    </location>
</feature>
<feature type="modified residue" description="O-(pantetheine 4'-phosphoryl)serine" evidence="2">
    <location>
        <position position="37"/>
    </location>
</feature>
<proteinExistence type="inferred from homology"/>
<accession>C1DCE5</accession>